<feature type="chain" id="PRO_0000019368" description="Sodium/potassium/calcium exchanger 2">
    <location>
        <begin position="1"/>
        <end position="670"/>
    </location>
</feature>
<feature type="topological domain" description="Cytoplasmic" evidence="2">
    <location>
        <begin position="1"/>
        <end position="38"/>
    </location>
</feature>
<feature type="transmembrane region" description="Helical" evidence="2">
    <location>
        <begin position="39"/>
        <end position="59"/>
    </location>
</feature>
<feature type="topological domain" description="Extracellular" evidence="2">
    <location>
        <begin position="60"/>
        <end position="133"/>
    </location>
</feature>
<feature type="transmembrane region" description="Helical" evidence="2">
    <location>
        <begin position="134"/>
        <end position="154"/>
    </location>
</feature>
<feature type="topological domain" description="Cytoplasmic" evidence="2">
    <location>
        <begin position="155"/>
        <end position="179"/>
    </location>
</feature>
<feature type="transmembrane region" description="Helical" evidence="2">
    <location>
        <begin position="180"/>
        <end position="200"/>
    </location>
</feature>
<feature type="topological domain" description="Extracellular" evidence="2">
    <location>
        <begin position="201"/>
        <end position="205"/>
    </location>
</feature>
<feature type="transmembrane region" description="Helical" evidence="2">
    <location>
        <begin position="206"/>
        <end position="226"/>
    </location>
</feature>
<feature type="topological domain" description="Cytoplasmic" evidence="2">
    <location>
        <begin position="227"/>
        <end position="244"/>
    </location>
</feature>
<feature type="transmembrane region" description="Helical" evidence="2">
    <location>
        <begin position="245"/>
        <end position="265"/>
    </location>
</feature>
<feature type="topological domain" description="Extracellular" evidence="2">
    <location>
        <position position="266"/>
    </location>
</feature>
<feature type="transmembrane region" description="Helical" evidence="2">
    <location>
        <begin position="267"/>
        <end position="287"/>
    </location>
</feature>
<feature type="topological domain" description="Cytoplasmic" evidence="2">
    <location>
        <begin position="288"/>
        <end position="506"/>
    </location>
</feature>
<feature type="transmembrane region" description="Helical" evidence="2">
    <location>
        <begin position="507"/>
        <end position="527"/>
    </location>
</feature>
<feature type="topological domain" description="Extracellular" evidence="2">
    <location>
        <begin position="528"/>
        <end position="542"/>
    </location>
</feature>
<feature type="transmembrane region" description="Helical" evidence="2">
    <location>
        <begin position="543"/>
        <end position="563"/>
    </location>
</feature>
<feature type="topological domain" description="Cytoplasmic" evidence="2">
    <location>
        <begin position="564"/>
        <end position="578"/>
    </location>
</feature>
<feature type="transmembrane region" description="Helical" evidence="2">
    <location>
        <begin position="579"/>
        <end position="599"/>
    </location>
</feature>
<feature type="topological domain" description="Extracellular" evidence="2">
    <location>
        <begin position="600"/>
        <end position="611"/>
    </location>
</feature>
<feature type="transmembrane region" description="Helical" evidence="2">
    <location>
        <begin position="612"/>
        <end position="632"/>
    </location>
</feature>
<feature type="topological domain" description="Cytoplasmic" evidence="2">
    <location>
        <begin position="633"/>
        <end position="639"/>
    </location>
</feature>
<feature type="transmembrane region" description="Helical" evidence="2">
    <location>
        <begin position="640"/>
        <end position="660"/>
    </location>
</feature>
<feature type="topological domain" description="Extracellular" evidence="2">
    <location>
        <begin position="661"/>
        <end position="670"/>
    </location>
</feature>
<feature type="repeat" description="Alpha-1">
    <location>
        <begin position="175"/>
        <end position="215"/>
    </location>
</feature>
<feature type="repeat" description="Alpha-2">
    <location>
        <begin position="550"/>
        <end position="581"/>
    </location>
</feature>
<feature type="region of interest" description="Disordered" evidence="3">
    <location>
        <begin position="67"/>
        <end position="86"/>
    </location>
</feature>
<feature type="region of interest" description="Disordered" evidence="3">
    <location>
        <begin position="91"/>
        <end position="122"/>
    </location>
</feature>
<feature type="region of interest" description="Disordered" evidence="3">
    <location>
        <begin position="312"/>
        <end position="335"/>
    </location>
</feature>
<feature type="region of interest" description="Disordered" evidence="3">
    <location>
        <begin position="394"/>
        <end position="414"/>
    </location>
</feature>
<feature type="region of interest" description="Disordered" evidence="3">
    <location>
        <begin position="450"/>
        <end position="471"/>
    </location>
</feature>
<feature type="compositionally biased region" description="Basic and acidic residues" evidence="3">
    <location>
        <begin position="106"/>
        <end position="122"/>
    </location>
</feature>
<feature type="modified residue" description="Phosphoserine" evidence="8">
    <location>
        <position position="337"/>
    </location>
</feature>
<feature type="modified residue" description="Phosphoserine" evidence="8">
    <location>
        <position position="341"/>
    </location>
</feature>
<feature type="glycosylation site" description="N-linked (GlcNAc...) asparagine" evidence="2">
    <location>
        <position position="112"/>
    </location>
</feature>
<feature type="splice variant" id="VSP_006165" description="In isoform 2." evidence="5">
    <location>
        <begin position="360"/>
        <end position="376"/>
    </location>
</feature>
<feature type="sequence conflict" description="In Ref. 1; AAC19404." evidence="6" ref="1">
    <original>Q</original>
    <variation>R</variation>
    <location>
        <position position="309"/>
    </location>
</feature>
<dbReference type="EMBL" id="AF021923">
    <property type="protein sequence ID" value="AAC19405.1"/>
    <property type="molecule type" value="mRNA"/>
</dbReference>
<dbReference type="EMBL" id="AF027506">
    <property type="protein sequence ID" value="AAC19404.1"/>
    <property type="molecule type" value="mRNA"/>
</dbReference>
<dbReference type="RefSeq" id="NP_113931.1">
    <molecule id="O54701-1"/>
    <property type="nucleotide sequence ID" value="NM_031743.4"/>
</dbReference>
<dbReference type="RefSeq" id="XP_063144571.1">
    <molecule id="O54701-1"/>
    <property type="nucleotide sequence ID" value="XM_063288501.1"/>
</dbReference>
<dbReference type="RefSeq" id="XP_063144572.1">
    <molecule id="O54701-1"/>
    <property type="nucleotide sequence ID" value="XM_063288502.1"/>
</dbReference>
<dbReference type="RefSeq" id="XP_063144573.1">
    <molecule id="O54701-1"/>
    <property type="nucleotide sequence ID" value="XM_063288503.1"/>
</dbReference>
<dbReference type="RefSeq" id="XP_063144574.1">
    <molecule id="O54701-1"/>
    <property type="nucleotide sequence ID" value="XM_063288504.1"/>
</dbReference>
<dbReference type="RefSeq" id="XP_063144577.1">
    <molecule id="O54701-2"/>
    <property type="nucleotide sequence ID" value="XM_063288507.1"/>
</dbReference>
<dbReference type="RefSeq" id="XP_063144578.1">
    <molecule id="O54701-2"/>
    <property type="nucleotide sequence ID" value="XM_063288508.1"/>
</dbReference>
<dbReference type="RefSeq" id="XP_063144579.1">
    <molecule id="O54701-2"/>
    <property type="nucleotide sequence ID" value="XM_063288509.1"/>
</dbReference>
<dbReference type="SMR" id="O54701"/>
<dbReference type="BioGRID" id="250001">
    <property type="interactions" value="1"/>
</dbReference>
<dbReference type="FunCoup" id="O54701">
    <property type="interactions" value="383"/>
</dbReference>
<dbReference type="STRING" id="10116.ENSRNOP00000010827"/>
<dbReference type="TCDB" id="2.A.19.4.2">
    <property type="family name" value="the ca(2+):cation antiporter (caca) family"/>
</dbReference>
<dbReference type="GlyCosmos" id="O54701">
    <property type="glycosylation" value="1 site, No reported glycans"/>
</dbReference>
<dbReference type="GlyGen" id="O54701">
    <property type="glycosylation" value="1 site"/>
</dbReference>
<dbReference type="iPTMnet" id="O54701"/>
<dbReference type="PhosphoSitePlus" id="O54701"/>
<dbReference type="PaxDb" id="10116-ENSRNOP00000010827"/>
<dbReference type="Ensembl" id="ENSRNOT00000010827.7">
    <molecule id="O54701-1"/>
    <property type="protein sequence ID" value="ENSRNOP00000010827.6"/>
    <property type="gene ID" value="ENSRNOG00000008169.7"/>
</dbReference>
<dbReference type="Ensembl" id="ENSRNOT00000083373.2">
    <molecule id="O54701-2"/>
    <property type="protein sequence ID" value="ENSRNOP00000074180.2"/>
    <property type="gene ID" value="ENSRNOG00000008169.7"/>
</dbReference>
<dbReference type="GeneID" id="84550"/>
<dbReference type="KEGG" id="rno:84550"/>
<dbReference type="UCSC" id="RGD:628650">
    <molecule id="O54701-1"/>
    <property type="organism name" value="rat"/>
</dbReference>
<dbReference type="AGR" id="RGD:628650"/>
<dbReference type="CTD" id="25769"/>
<dbReference type="RGD" id="628650">
    <property type="gene designation" value="Slc24a2"/>
</dbReference>
<dbReference type="eggNOG" id="KOG1307">
    <property type="taxonomic scope" value="Eukaryota"/>
</dbReference>
<dbReference type="GeneTree" id="ENSGT01030000234532"/>
<dbReference type="HOGENOM" id="CLU_007948_5_1_1"/>
<dbReference type="InParanoid" id="O54701"/>
<dbReference type="OrthoDB" id="72323at9989"/>
<dbReference type="PhylomeDB" id="O54701"/>
<dbReference type="TreeFam" id="TF318759"/>
<dbReference type="Reactome" id="R-RNO-425561">
    <property type="pathway name" value="Sodium/Calcium exchangers"/>
</dbReference>
<dbReference type="PRO" id="PR:O54701"/>
<dbReference type="Proteomes" id="UP000002494">
    <property type="component" value="Chromosome 5"/>
</dbReference>
<dbReference type="Bgee" id="ENSRNOG00000008169">
    <property type="expression patterns" value="Expressed in Ammon's horn and 3 other cell types or tissues"/>
</dbReference>
<dbReference type="GO" id="GO:0016020">
    <property type="term" value="C:membrane"/>
    <property type="evidence" value="ECO:0000266"/>
    <property type="project" value="RGD"/>
</dbReference>
<dbReference type="GO" id="GO:0005886">
    <property type="term" value="C:plasma membrane"/>
    <property type="evidence" value="ECO:0000266"/>
    <property type="project" value="RGD"/>
</dbReference>
<dbReference type="GO" id="GO:0098794">
    <property type="term" value="C:postsynapse"/>
    <property type="evidence" value="ECO:0000266"/>
    <property type="project" value="RGD"/>
</dbReference>
<dbReference type="GO" id="GO:0098793">
    <property type="term" value="C:presynapse"/>
    <property type="evidence" value="ECO:0000266"/>
    <property type="project" value="RGD"/>
</dbReference>
<dbReference type="GO" id="GO:0005262">
    <property type="term" value="F:calcium channel activity"/>
    <property type="evidence" value="ECO:0000266"/>
    <property type="project" value="RGD"/>
</dbReference>
<dbReference type="GO" id="GO:0008273">
    <property type="term" value="F:calcium, potassium:sodium antiporter activity"/>
    <property type="evidence" value="ECO:0000314"/>
    <property type="project" value="RGD"/>
</dbReference>
<dbReference type="GO" id="GO:0015293">
    <property type="term" value="F:symporter activity"/>
    <property type="evidence" value="ECO:0007669"/>
    <property type="project" value="UniProtKB-KW"/>
</dbReference>
<dbReference type="GO" id="GO:0070509">
    <property type="term" value="P:calcium ion import"/>
    <property type="evidence" value="ECO:0000266"/>
    <property type="project" value="RGD"/>
</dbReference>
<dbReference type="GO" id="GO:0098703">
    <property type="term" value="P:calcium ion import across plasma membrane"/>
    <property type="evidence" value="ECO:0000266"/>
    <property type="project" value="RGD"/>
</dbReference>
<dbReference type="GO" id="GO:0070588">
    <property type="term" value="P:calcium ion transmembrane transport"/>
    <property type="evidence" value="ECO:0000314"/>
    <property type="project" value="RGD"/>
</dbReference>
<dbReference type="GO" id="GO:0006816">
    <property type="term" value="P:calcium ion transport"/>
    <property type="evidence" value="ECO:0000266"/>
    <property type="project" value="RGD"/>
</dbReference>
<dbReference type="GO" id="GO:0051649">
    <property type="term" value="P:establishment of localization in cell"/>
    <property type="evidence" value="ECO:0000266"/>
    <property type="project" value="RGD"/>
</dbReference>
<dbReference type="GO" id="GO:0006874">
    <property type="term" value="P:intracellular calcium ion homeostasis"/>
    <property type="evidence" value="ECO:0000266"/>
    <property type="project" value="RGD"/>
</dbReference>
<dbReference type="GO" id="GO:0007612">
    <property type="term" value="P:learning"/>
    <property type="evidence" value="ECO:0000266"/>
    <property type="project" value="RGD"/>
</dbReference>
<dbReference type="GO" id="GO:0060292">
    <property type="term" value="P:long-term synaptic depression"/>
    <property type="evidence" value="ECO:0000266"/>
    <property type="project" value="RGD"/>
</dbReference>
<dbReference type="GO" id="GO:0060291">
    <property type="term" value="P:long-term synaptic potentiation"/>
    <property type="evidence" value="ECO:0000266"/>
    <property type="project" value="RGD"/>
</dbReference>
<dbReference type="GO" id="GO:0007613">
    <property type="term" value="P:memory"/>
    <property type="evidence" value="ECO:0000266"/>
    <property type="project" value="RGD"/>
</dbReference>
<dbReference type="GO" id="GO:0034220">
    <property type="term" value="P:monoatomic ion transmembrane transport"/>
    <property type="evidence" value="ECO:0000266"/>
    <property type="project" value="RGD"/>
</dbReference>
<dbReference type="GO" id="GO:0070050">
    <property type="term" value="P:neuron cellular homeostasis"/>
    <property type="evidence" value="ECO:0000266"/>
    <property type="project" value="RGD"/>
</dbReference>
<dbReference type="GO" id="GO:0071805">
    <property type="term" value="P:potassium ion transmembrane transport"/>
    <property type="evidence" value="ECO:0000266"/>
    <property type="project" value="RGD"/>
</dbReference>
<dbReference type="GO" id="GO:0065003">
    <property type="term" value="P:protein-containing complex assembly"/>
    <property type="evidence" value="ECO:0000315"/>
    <property type="project" value="RGD"/>
</dbReference>
<dbReference type="GO" id="GO:0035725">
    <property type="term" value="P:sodium ion transmembrane transport"/>
    <property type="evidence" value="ECO:0000266"/>
    <property type="project" value="RGD"/>
</dbReference>
<dbReference type="FunFam" id="1.20.1420.30:FF:000002">
    <property type="entry name" value="Sodium/potassium/calcium exchanger 2 isoform 1"/>
    <property type="match status" value="1"/>
</dbReference>
<dbReference type="FunFam" id="1.20.1420.30:FF:000004">
    <property type="entry name" value="Sodium/potassium/calcium exchanger 2 isoform 1"/>
    <property type="match status" value="1"/>
</dbReference>
<dbReference type="Gene3D" id="1.20.1420.30">
    <property type="entry name" value="NCX, central ion-binding region"/>
    <property type="match status" value="2"/>
</dbReference>
<dbReference type="InterPro" id="IPR004481">
    <property type="entry name" value="K/Na/Ca-exchanger"/>
</dbReference>
<dbReference type="InterPro" id="IPR004837">
    <property type="entry name" value="NaCa_Exmemb"/>
</dbReference>
<dbReference type="InterPro" id="IPR044880">
    <property type="entry name" value="NCX_ion-bd_dom_sf"/>
</dbReference>
<dbReference type="NCBIfam" id="TIGR00367">
    <property type="entry name" value="calcium/sodium antiporter"/>
    <property type="match status" value="1"/>
</dbReference>
<dbReference type="PANTHER" id="PTHR10846">
    <property type="entry name" value="SODIUM/POTASSIUM/CALCIUM EXCHANGER"/>
    <property type="match status" value="1"/>
</dbReference>
<dbReference type="PANTHER" id="PTHR10846:SF41">
    <property type="entry name" value="SODIUM_POTASSIUM_CALCIUM EXCHANGER 2"/>
    <property type="match status" value="1"/>
</dbReference>
<dbReference type="Pfam" id="PF01699">
    <property type="entry name" value="Na_Ca_ex"/>
    <property type="match status" value="2"/>
</dbReference>
<comment type="function">
    <text evidence="1 4">Calcium, potassium:sodium antiporter that transports 1 Ca(2+) and 1 K(+) in exchange for 4 Na(+) (PubMed:9461611). Required for learming and memory by regulating neuronal Ca(2+), which is essential for the development of synaptic plasticity (By similarity).</text>
</comment>
<comment type="catalytic activity">
    <reaction evidence="7">
        <text>Ca(2+)(out) + K(+)(out) + 4 Na(+)(in) = Ca(2+)(in) + K(+)(in) + 4 Na(+)(out)</text>
        <dbReference type="Rhea" id="RHEA:69967"/>
        <dbReference type="ChEBI" id="CHEBI:29101"/>
        <dbReference type="ChEBI" id="CHEBI:29103"/>
        <dbReference type="ChEBI" id="CHEBI:29108"/>
    </reaction>
</comment>
<comment type="subcellular location">
    <subcellularLocation>
        <location evidence="4">Cell membrane</location>
        <topology evidence="2">Multi-pass membrane protein</topology>
    </subcellularLocation>
</comment>
<comment type="alternative products">
    <event type="alternative splicing"/>
    <isoform>
        <id>O54701-1</id>
        <name>1</name>
        <sequence type="displayed"/>
    </isoform>
    <isoform>
        <id>O54701-2</id>
        <name>2</name>
        <sequence type="described" ref="VSP_006165"/>
    </isoform>
</comment>
<comment type="tissue specificity">
    <text evidence="4">Expressed abundantly in all regions of the brain and weakly in the eye, large intestine and adrenal tissue.</text>
</comment>
<comment type="similarity">
    <text evidence="6">Belongs to the Ca(2+):cation antiporter (CaCA) (TC 2.A.19) family. SLC24A subfamily.</text>
</comment>
<reference key="1">
    <citation type="journal article" date="1998" name="J. Biol. Chem.">
        <title>Molecular cloning of a novel potassium-dependent sodium-calcium exchanger from rat brain.</title>
        <authorList>
            <person name="Tsoi M."/>
            <person name="Rhee K.-H."/>
            <person name="Bungard D."/>
            <person name="Li X.-F."/>
            <person name="Lee S.-L."/>
            <person name="Auer R.N."/>
            <person name="Lytton J."/>
        </authorList>
    </citation>
    <scope>NUCLEOTIDE SEQUENCE [MRNA] (ISOFORMS 1 AND 2)</scope>
    <scope>FUNCTION</scope>
    <scope>TRANSPORTER ACTIVITY</scope>
    <scope>SUBCELLULAR LOCATION</scope>
    <scope>TISSUE SPECIFICITY</scope>
    <source>
        <strain>Sprague-Dawley</strain>
        <tissue>Brain cortex</tissue>
    </source>
</reference>
<reference key="2">
    <citation type="journal article" date="2012" name="Nat. Commun.">
        <title>Quantitative maps of protein phosphorylation sites across 14 different rat organs and tissues.</title>
        <authorList>
            <person name="Lundby A."/>
            <person name="Secher A."/>
            <person name="Lage K."/>
            <person name="Nordsborg N.B."/>
            <person name="Dmytriyev A."/>
            <person name="Lundby C."/>
            <person name="Olsen J.V."/>
        </authorList>
    </citation>
    <scope>PHOSPHORYLATION [LARGE SCALE ANALYSIS] AT SER-337 AND SER-341</scope>
    <scope>IDENTIFICATION BY MASS SPECTROMETRY [LARGE SCALE ANALYSIS]</scope>
</reference>
<keyword id="KW-0025">Alternative splicing</keyword>
<keyword id="KW-0050">Antiport</keyword>
<keyword id="KW-0106">Calcium</keyword>
<keyword id="KW-0109">Calcium transport</keyword>
<keyword id="KW-1003">Cell membrane</keyword>
<keyword id="KW-0325">Glycoprotein</keyword>
<keyword id="KW-0406">Ion transport</keyword>
<keyword id="KW-0472">Membrane</keyword>
<keyword id="KW-0597">Phosphoprotein</keyword>
<keyword id="KW-0630">Potassium</keyword>
<keyword id="KW-0633">Potassium transport</keyword>
<keyword id="KW-1185">Reference proteome</keyword>
<keyword id="KW-0677">Repeat</keyword>
<keyword id="KW-0915">Sodium</keyword>
<keyword id="KW-0739">Sodium transport</keyword>
<keyword id="KW-0769">Symport</keyword>
<keyword id="KW-0812">Transmembrane</keyword>
<keyword id="KW-1133">Transmembrane helix</keyword>
<keyword id="KW-0813">Transport</keyword>
<sequence length="670" mass="74657">MDLHQSATVRLLQEWCSHESPSGCRRHYNTRKKLKLIRVIGLVMGLVAVSTVPFSISAFTETYSQNNRGEASDVTGPRAAPGHRQRTLLDLNDKIRDYTPQPPASQEDRSENGTDHAQGDYPKDVFSLEERRKGAIILHVIGMIYMFIALAIVCDEFFVPSLTVITEKLGISDDVAGATFMAAGGSAPELFTSLIGVFIAHSNVGIGTIVGSAVFNILFVIGMCALFSREILNLTWWPLFRDVSFYIVDLIMLIIFFLDNVIMWWESLLLLTAYFAYVVFMKFNVQVERWVKQMINRNKVVKVTVSEAQAKASTAGDKEEPTLPNKPRLQRGGSSASLHNSLMRNSIFQLMIHTLDPLAEELGSYGKLKYYDTMTEEGRFREKASILHKIAKKKCQVDENERQNGAANHVDYAAEKIELPNSTSTEVEMTPSSEASEPVQNGNLSHSIEAADAPQATETAEEDDDQPLSLSWPSNTRKQITFLIVLPIVFPLWITLPDVRKPASKKFFPITFFGSITWIAVFSYLMVWWAHQVGETIGISEEIMGLTILAAGTSIPDLITSVIVARKGLGDMAVSSSVGSNIFDITVGLPLPWLLYTIIHRFKPVTVSSNGLFCAIVLLFIMLIFVILSIALCKWRMNKILGFIMFGLYFAFLVVSVLLEDKVLECPVSI</sequence>
<gene>
    <name type="primary">Slc24a2</name>
    <name type="synonym">Nckx2</name>
</gene>
<organism>
    <name type="scientific">Rattus norvegicus</name>
    <name type="common">Rat</name>
    <dbReference type="NCBI Taxonomy" id="10116"/>
    <lineage>
        <taxon>Eukaryota</taxon>
        <taxon>Metazoa</taxon>
        <taxon>Chordata</taxon>
        <taxon>Craniata</taxon>
        <taxon>Vertebrata</taxon>
        <taxon>Euteleostomi</taxon>
        <taxon>Mammalia</taxon>
        <taxon>Eutheria</taxon>
        <taxon>Euarchontoglires</taxon>
        <taxon>Glires</taxon>
        <taxon>Rodentia</taxon>
        <taxon>Myomorpha</taxon>
        <taxon>Muroidea</taxon>
        <taxon>Muridae</taxon>
        <taxon>Murinae</taxon>
        <taxon>Rattus</taxon>
    </lineage>
</organism>
<evidence type="ECO:0000250" key="1">
    <source>
        <dbReference type="UniProtKB" id="Q8BUN9"/>
    </source>
</evidence>
<evidence type="ECO:0000255" key="2"/>
<evidence type="ECO:0000256" key="3">
    <source>
        <dbReference type="SAM" id="MobiDB-lite"/>
    </source>
</evidence>
<evidence type="ECO:0000269" key="4">
    <source>
    </source>
</evidence>
<evidence type="ECO:0000303" key="5">
    <source>
    </source>
</evidence>
<evidence type="ECO:0000305" key="6"/>
<evidence type="ECO:0000305" key="7">
    <source>
    </source>
</evidence>
<evidence type="ECO:0007744" key="8">
    <source>
    </source>
</evidence>
<protein>
    <recommendedName>
        <fullName>Sodium/potassium/calcium exchanger 2</fullName>
    </recommendedName>
    <alternativeName>
        <fullName>Na(+)/K(+)/Ca(2+)-exchange protein 2</fullName>
    </alternativeName>
    <alternativeName>
        <fullName>Retinal cone Na-Ca+K exchanger</fullName>
    </alternativeName>
    <alternativeName>
        <fullName>Solute carrier family 24 member 2</fullName>
    </alternativeName>
</protein>
<accession>O54701</accession>
<accession>O54706</accession>
<proteinExistence type="evidence at protein level"/>
<name>NCKX2_RAT</name>